<accession>B8CN81</accession>
<comment type="function">
    <text evidence="1">Catalyzes the conversion of uracil and 5-phospho-alpha-D-ribose 1-diphosphate (PRPP) to UMP and diphosphate.</text>
</comment>
<comment type="catalytic activity">
    <reaction evidence="1">
        <text>UMP + diphosphate = 5-phospho-alpha-D-ribose 1-diphosphate + uracil</text>
        <dbReference type="Rhea" id="RHEA:13017"/>
        <dbReference type="ChEBI" id="CHEBI:17568"/>
        <dbReference type="ChEBI" id="CHEBI:33019"/>
        <dbReference type="ChEBI" id="CHEBI:57865"/>
        <dbReference type="ChEBI" id="CHEBI:58017"/>
        <dbReference type="EC" id="2.4.2.9"/>
    </reaction>
</comment>
<comment type="cofactor">
    <cofactor evidence="1">
        <name>Mg(2+)</name>
        <dbReference type="ChEBI" id="CHEBI:18420"/>
    </cofactor>
    <text evidence="1">Binds 1 Mg(2+) ion per subunit. The magnesium is bound as Mg-PRPP.</text>
</comment>
<comment type="activity regulation">
    <text evidence="1">Allosterically activated by GTP.</text>
</comment>
<comment type="pathway">
    <text evidence="1">Pyrimidine metabolism; UMP biosynthesis via salvage pathway; UMP from uracil: step 1/1.</text>
</comment>
<comment type="similarity">
    <text evidence="1">Belongs to the UPRTase family.</text>
</comment>
<feature type="chain" id="PRO_1000139162" description="Uracil phosphoribosyltransferase">
    <location>
        <begin position="1"/>
        <end position="208"/>
    </location>
</feature>
<feature type="binding site" evidence="1">
    <location>
        <position position="78"/>
    </location>
    <ligand>
        <name>5-phospho-alpha-D-ribose 1-diphosphate</name>
        <dbReference type="ChEBI" id="CHEBI:58017"/>
    </ligand>
</feature>
<feature type="binding site" evidence="1">
    <location>
        <position position="103"/>
    </location>
    <ligand>
        <name>5-phospho-alpha-D-ribose 1-diphosphate</name>
        <dbReference type="ChEBI" id="CHEBI:58017"/>
    </ligand>
</feature>
<feature type="binding site" evidence="1">
    <location>
        <begin position="130"/>
        <end position="138"/>
    </location>
    <ligand>
        <name>5-phospho-alpha-D-ribose 1-diphosphate</name>
        <dbReference type="ChEBI" id="CHEBI:58017"/>
    </ligand>
</feature>
<feature type="binding site" evidence="1">
    <location>
        <position position="193"/>
    </location>
    <ligand>
        <name>uracil</name>
        <dbReference type="ChEBI" id="CHEBI:17568"/>
    </ligand>
</feature>
<feature type="binding site" evidence="1">
    <location>
        <begin position="198"/>
        <end position="200"/>
    </location>
    <ligand>
        <name>uracil</name>
        <dbReference type="ChEBI" id="CHEBI:17568"/>
    </ligand>
</feature>
<feature type="binding site" evidence="1">
    <location>
        <position position="199"/>
    </location>
    <ligand>
        <name>5-phospho-alpha-D-ribose 1-diphosphate</name>
        <dbReference type="ChEBI" id="CHEBI:58017"/>
    </ligand>
</feature>
<evidence type="ECO:0000255" key="1">
    <source>
        <dbReference type="HAMAP-Rule" id="MF_01218"/>
    </source>
</evidence>
<keyword id="KW-0021">Allosteric enzyme</keyword>
<keyword id="KW-0328">Glycosyltransferase</keyword>
<keyword id="KW-0342">GTP-binding</keyword>
<keyword id="KW-0460">Magnesium</keyword>
<keyword id="KW-0547">Nucleotide-binding</keyword>
<keyword id="KW-0808">Transferase</keyword>
<organism>
    <name type="scientific">Shewanella piezotolerans (strain WP3 / JCM 13877)</name>
    <dbReference type="NCBI Taxonomy" id="225849"/>
    <lineage>
        <taxon>Bacteria</taxon>
        <taxon>Pseudomonadati</taxon>
        <taxon>Pseudomonadota</taxon>
        <taxon>Gammaproteobacteria</taxon>
        <taxon>Alteromonadales</taxon>
        <taxon>Shewanellaceae</taxon>
        <taxon>Shewanella</taxon>
    </lineage>
</organism>
<reference key="1">
    <citation type="journal article" date="2008" name="PLoS ONE">
        <title>Environmental adaptation: genomic analysis of the piezotolerant and psychrotolerant deep-sea iron reducing bacterium Shewanella piezotolerans WP3.</title>
        <authorList>
            <person name="Wang F."/>
            <person name="Wang J."/>
            <person name="Jian H."/>
            <person name="Zhang B."/>
            <person name="Li S."/>
            <person name="Wang F."/>
            <person name="Zeng X."/>
            <person name="Gao L."/>
            <person name="Bartlett D.H."/>
            <person name="Yu J."/>
            <person name="Hu S."/>
            <person name="Xiao X."/>
        </authorList>
    </citation>
    <scope>NUCLEOTIDE SEQUENCE [LARGE SCALE GENOMIC DNA]</scope>
    <source>
        <strain>WP3 / JCM 13877</strain>
    </source>
</reference>
<name>UPP_SHEPW</name>
<gene>
    <name evidence="1" type="primary">upp</name>
    <name type="ordered locus">swp_1819</name>
</gene>
<dbReference type="EC" id="2.4.2.9" evidence="1"/>
<dbReference type="EMBL" id="CP000472">
    <property type="protein sequence ID" value="ACJ28583.1"/>
    <property type="molecule type" value="Genomic_DNA"/>
</dbReference>
<dbReference type="RefSeq" id="WP_020911961.1">
    <property type="nucleotide sequence ID" value="NC_011566.1"/>
</dbReference>
<dbReference type="SMR" id="B8CN81"/>
<dbReference type="STRING" id="225849.swp_1819"/>
<dbReference type="KEGG" id="swp:swp_1819"/>
<dbReference type="eggNOG" id="COG0035">
    <property type="taxonomic scope" value="Bacteria"/>
</dbReference>
<dbReference type="HOGENOM" id="CLU_067096_2_2_6"/>
<dbReference type="OrthoDB" id="9781675at2"/>
<dbReference type="UniPathway" id="UPA00574">
    <property type="reaction ID" value="UER00636"/>
</dbReference>
<dbReference type="Proteomes" id="UP000000753">
    <property type="component" value="Chromosome"/>
</dbReference>
<dbReference type="GO" id="GO:0005525">
    <property type="term" value="F:GTP binding"/>
    <property type="evidence" value="ECO:0007669"/>
    <property type="project" value="UniProtKB-KW"/>
</dbReference>
<dbReference type="GO" id="GO:0000287">
    <property type="term" value="F:magnesium ion binding"/>
    <property type="evidence" value="ECO:0007669"/>
    <property type="project" value="UniProtKB-UniRule"/>
</dbReference>
<dbReference type="GO" id="GO:0004845">
    <property type="term" value="F:uracil phosphoribosyltransferase activity"/>
    <property type="evidence" value="ECO:0007669"/>
    <property type="project" value="UniProtKB-UniRule"/>
</dbReference>
<dbReference type="GO" id="GO:0044206">
    <property type="term" value="P:UMP salvage"/>
    <property type="evidence" value="ECO:0007669"/>
    <property type="project" value="UniProtKB-UniRule"/>
</dbReference>
<dbReference type="GO" id="GO:0006223">
    <property type="term" value="P:uracil salvage"/>
    <property type="evidence" value="ECO:0007669"/>
    <property type="project" value="InterPro"/>
</dbReference>
<dbReference type="CDD" id="cd06223">
    <property type="entry name" value="PRTases_typeI"/>
    <property type="match status" value="1"/>
</dbReference>
<dbReference type="FunFam" id="3.40.50.2020:FF:000003">
    <property type="entry name" value="Uracil phosphoribosyltransferase"/>
    <property type="match status" value="1"/>
</dbReference>
<dbReference type="Gene3D" id="3.40.50.2020">
    <property type="match status" value="1"/>
</dbReference>
<dbReference type="HAMAP" id="MF_01218_B">
    <property type="entry name" value="Upp_B"/>
    <property type="match status" value="1"/>
</dbReference>
<dbReference type="InterPro" id="IPR000836">
    <property type="entry name" value="PRibTrfase_dom"/>
</dbReference>
<dbReference type="InterPro" id="IPR029057">
    <property type="entry name" value="PRTase-like"/>
</dbReference>
<dbReference type="InterPro" id="IPR034332">
    <property type="entry name" value="Upp_B"/>
</dbReference>
<dbReference type="InterPro" id="IPR050054">
    <property type="entry name" value="UPRTase/APRTase"/>
</dbReference>
<dbReference type="InterPro" id="IPR005765">
    <property type="entry name" value="Ura_phspho_trans"/>
</dbReference>
<dbReference type="NCBIfam" id="NF001097">
    <property type="entry name" value="PRK00129.1"/>
    <property type="match status" value="1"/>
</dbReference>
<dbReference type="NCBIfam" id="TIGR01091">
    <property type="entry name" value="upp"/>
    <property type="match status" value="1"/>
</dbReference>
<dbReference type="PANTHER" id="PTHR32315">
    <property type="entry name" value="ADENINE PHOSPHORIBOSYLTRANSFERASE"/>
    <property type="match status" value="1"/>
</dbReference>
<dbReference type="PANTHER" id="PTHR32315:SF4">
    <property type="entry name" value="URACIL PHOSPHORIBOSYLTRANSFERASE, CHLOROPLASTIC"/>
    <property type="match status" value="1"/>
</dbReference>
<dbReference type="Pfam" id="PF14681">
    <property type="entry name" value="UPRTase"/>
    <property type="match status" value="1"/>
</dbReference>
<dbReference type="SUPFAM" id="SSF53271">
    <property type="entry name" value="PRTase-like"/>
    <property type="match status" value="1"/>
</dbReference>
<sequence length="208" mass="22565">MKVVEVKHPLVRHKIGLMREGDVSTKRFRELAAEVGSLLTYEATADFETEKVTIEGWNGPVEVEQIKGKKVTVVPILRAGLGMMDGVLEHVPSARISVVGMYRDEETLEPVPYFEKLASNMPERMALVVDPMLATGGSMISTIDLLKDRGCTSIKALVLVAAPEGVAALEKAHPDVELYTASIDDCLNEQGYILPGLGDAGDKIFGTK</sequence>
<protein>
    <recommendedName>
        <fullName evidence="1">Uracil phosphoribosyltransferase</fullName>
        <ecNumber evidence="1">2.4.2.9</ecNumber>
    </recommendedName>
    <alternativeName>
        <fullName evidence="1">UMP pyrophosphorylase</fullName>
    </alternativeName>
    <alternativeName>
        <fullName evidence="1">UPRTase</fullName>
    </alternativeName>
</protein>
<proteinExistence type="inferred from homology"/>